<accession>Q4JTZ8</accession>
<reference key="1">
    <citation type="journal article" date="2005" name="J. Bacteriol.">
        <title>Complete genome sequence and analysis of the multiresistant nosocomial pathogen Corynebacterium jeikeium K411, a lipid-requiring bacterium of the human skin flora.</title>
        <authorList>
            <person name="Tauch A."/>
            <person name="Kaiser O."/>
            <person name="Hain T."/>
            <person name="Goesmann A."/>
            <person name="Weisshaar B."/>
            <person name="Albersmeier A."/>
            <person name="Bekel T."/>
            <person name="Bischoff N."/>
            <person name="Brune I."/>
            <person name="Chakraborty T."/>
            <person name="Kalinowski J."/>
            <person name="Meyer F."/>
            <person name="Rupp O."/>
            <person name="Schneiker S."/>
            <person name="Viehoever P."/>
            <person name="Puehler A."/>
        </authorList>
    </citation>
    <scope>NUCLEOTIDE SEQUENCE [LARGE SCALE GENOMIC DNA]</scope>
    <source>
        <strain>K411</strain>
    </source>
</reference>
<evidence type="ECO:0000255" key="1">
    <source>
        <dbReference type="HAMAP-Rule" id="MF_00294"/>
    </source>
</evidence>
<evidence type="ECO:0000305" key="2"/>
<proteinExistence type="inferred from homology"/>
<dbReference type="EMBL" id="CR931997">
    <property type="protein sequence ID" value="CAI37709.1"/>
    <property type="molecule type" value="Genomic_DNA"/>
</dbReference>
<dbReference type="RefSeq" id="WP_005279910.1">
    <property type="nucleotide sequence ID" value="NC_007164.1"/>
</dbReference>
<dbReference type="SMR" id="Q4JTZ8"/>
<dbReference type="STRING" id="306537.jk1536"/>
<dbReference type="GeneID" id="92746601"/>
<dbReference type="KEGG" id="cjk:jk1536"/>
<dbReference type="eggNOG" id="COG0267">
    <property type="taxonomic scope" value="Bacteria"/>
</dbReference>
<dbReference type="HOGENOM" id="CLU_190949_1_1_11"/>
<dbReference type="OrthoDB" id="21586at2"/>
<dbReference type="Proteomes" id="UP000000545">
    <property type="component" value="Chromosome"/>
</dbReference>
<dbReference type="GO" id="GO:0022625">
    <property type="term" value="C:cytosolic large ribosomal subunit"/>
    <property type="evidence" value="ECO:0007669"/>
    <property type="project" value="TreeGrafter"/>
</dbReference>
<dbReference type="GO" id="GO:0003735">
    <property type="term" value="F:structural constituent of ribosome"/>
    <property type="evidence" value="ECO:0007669"/>
    <property type="project" value="InterPro"/>
</dbReference>
<dbReference type="GO" id="GO:0006412">
    <property type="term" value="P:translation"/>
    <property type="evidence" value="ECO:0007669"/>
    <property type="project" value="UniProtKB-UniRule"/>
</dbReference>
<dbReference type="FunFam" id="2.20.28.120:FF:000002">
    <property type="entry name" value="50S ribosomal protein L33"/>
    <property type="match status" value="1"/>
</dbReference>
<dbReference type="Gene3D" id="2.20.28.120">
    <property type="entry name" value="Ribosomal protein L33"/>
    <property type="match status" value="1"/>
</dbReference>
<dbReference type="HAMAP" id="MF_00294">
    <property type="entry name" value="Ribosomal_bL33"/>
    <property type="match status" value="1"/>
</dbReference>
<dbReference type="InterPro" id="IPR001705">
    <property type="entry name" value="Ribosomal_bL33"/>
</dbReference>
<dbReference type="InterPro" id="IPR018264">
    <property type="entry name" value="Ribosomal_bL33_CS"/>
</dbReference>
<dbReference type="InterPro" id="IPR038584">
    <property type="entry name" value="Ribosomal_bL33_sf"/>
</dbReference>
<dbReference type="InterPro" id="IPR011332">
    <property type="entry name" value="Ribosomal_zn-bd"/>
</dbReference>
<dbReference type="NCBIfam" id="NF001860">
    <property type="entry name" value="PRK00595.1"/>
    <property type="match status" value="1"/>
</dbReference>
<dbReference type="NCBIfam" id="TIGR01023">
    <property type="entry name" value="rpmG_bact"/>
    <property type="match status" value="1"/>
</dbReference>
<dbReference type="PANTHER" id="PTHR15238">
    <property type="entry name" value="54S RIBOSOMAL PROTEIN L39, MITOCHONDRIAL"/>
    <property type="match status" value="1"/>
</dbReference>
<dbReference type="PANTHER" id="PTHR15238:SF1">
    <property type="entry name" value="LARGE RIBOSOMAL SUBUNIT PROTEIN BL33M"/>
    <property type="match status" value="1"/>
</dbReference>
<dbReference type="Pfam" id="PF00471">
    <property type="entry name" value="Ribosomal_L33"/>
    <property type="match status" value="1"/>
</dbReference>
<dbReference type="SUPFAM" id="SSF57829">
    <property type="entry name" value="Zn-binding ribosomal proteins"/>
    <property type="match status" value="1"/>
</dbReference>
<dbReference type="PROSITE" id="PS00582">
    <property type="entry name" value="RIBOSOMAL_L33"/>
    <property type="match status" value="1"/>
</dbReference>
<feature type="chain" id="PRO_1000004161" description="Large ribosomal subunit protein bL33">
    <location>
        <begin position="1"/>
        <end position="54"/>
    </location>
</feature>
<comment type="similarity">
    <text evidence="1">Belongs to the bacterial ribosomal protein bL33 family.</text>
</comment>
<organism>
    <name type="scientific">Corynebacterium jeikeium (strain K411)</name>
    <dbReference type="NCBI Taxonomy" id="306537"/>
    <lineage>
        <taxon>Bacteria</taxon>
        <taxon>Bacillati</taxon>
        <taxon>Actinomycetota</taxon>
        <taxon>Actinomycetes</taxon>
        <taxon>Mycobacteriales</taxon>
        <taxon>Corynebacteriaceae</taxon>
        <taxon>Corynebacterium</taxon>
    </lineage>
</organism>
<keyword id="KW-1185">Reference proteome</keyword>
<keyword id="KW-0687">Ribonucleoprotein</keyword>
<keyword id="KW-0689">Ribosomal protein</keyword>
<sequence length="54" mass="6444">MARNDIRPIIKLKSTAGTGYTYVTRKNKRNNPDRITLKKFDPIARKHVEFREER</sequence>
<protein>
    <recommendedName>
        <fullName evidence="1">Large ribosomal subunit protein bL33</fullName>
    </recommendedName>
    <alternativeName>
        <fullName evidence="2">50S ribosomal protein L33</fullName>
    </alternativeName>
</protein>
<gene>
    <name evidence="1" type="primary">rpmG</name>
    <name type="ordered locus">jk1536</name>
</gene>
<name>RL33_CORJK</name>